<reference key="1">
    <citation type="journal article" date="2007" name="Mol. Genet. Genomics">
        <title>Chloroplast genomes of the diatoms Phaeodactylum tricornutum and Thalassiosira pseudonana: comparison with other plastid genomes of the red lineage.</title>
        <authorList>
            <person name="Oudot-Le Secq M.-P."/>
            <person name="Grimwood J."/>
            <person name="Shapiro H."/>
            <person name="Armbrust E.V."/>
            <person name="Bowler C."/>
            <person name="Green B.R."/>
        </authorList>
    </citation>
    <scope>NUCLEOTIDE SEQUENCE [LARGE SCALE GENOMIC DNA]</scope>
    <source>
        <strain>CCAP 1055/1</strain>
    </source>
</reference>
<feature type="chain" id="PRO_0000276599" description="DNA-directed RNA polymerase subunit beta">
    <location>
        <begin position="1"/>
        <end position="1389"/>
    </location>
</feature>
<sequence length="1389" mass="160051">MNYTNALPDFLAMQRISFCWFITQGLTEELALFSRIQDFSQNTEYVMFGEEYSLIKPSYSLLIARKYSGNYRAQLVIPIEVRNKVVNSIRYHNQFPIITLPLMTTDATFIINGCERVIVSQIIRSPGVYFEKNKNQKTRNQFKKKLSTDINKLRSFIPSGEAFISEFDLFFPLPTSIYDPVKKKKKIIPHWQSNSIYYYSIKYLKQKQQNSTFYFLQSFKLYRVASKLLSSKSKQRVIQLFLKWLKLKNKSFEFQDEKQIYLIKYFNFLLTSLMKYEILQSSLTTKFNEDKTILLSKFTKSNAILNLSDKQIINLSMIYNKLIINSQTLAQMELNSNLFLITKEPREWLTEMSNFLFLKKQISKATFTLKSFQELTQLQNLKPAIYFSISLKEQLKYVFGKNKLTYKSDRHKYLKTKTQFLLYRKDHEIKTNYNKKYDEKDLYTATVIPEYGSWIRIGFQRNTKINSYKYPLKSQEDEVIIQLDKINQKPVLYLLKEMGLTDLEIYQNLEYADFFYFNKPLLINSKRLSEPLSRFNLGLSYFKNISEFSRIFDPTYYRLGRVGRLKINSRLNLKMSERLQTITYEDIFAITDKLINLTISKTVQDDIDHLKNRRVRSVGELLQNLFRIGFQRLGRKLRNQTNKIDSGQLLSFNIVNASIREFFGSSQLSQYLDQTNPLSSLTHRRRVSGLGPGGFDRDRISFAVRDIHPSHYGRICPIETPEGQNVGLIASLTTCARVNKSGFLETPFWRVINGKVVKTGQPVYLTADIEDFYKIAPADIATNKDNYLTKNVIPVRYKQDFVNVTPSEVDFIAISTIQVVSVAASLIPFFEHDDANRALMGSNMQRQSVPLLLPQKPIVGTGLENQIAIDSGMTLNSYSNGVVSSVTANKIVVNDKTGKRLTYKLQKYLRSNQQTCINHRPIVWKGEQVKSGQILTDGPAITSSELSLGQNVLIGYMPWQGYNFEDAILINERLVYDDVFTSIHIERYKIEIDRNSDTLERTTKNIPNLNPREIRHLNDDGIVTVGTFVRPGDILVGKVISNNTSEQLPESKLLRAIFGAKAKGVKDNSYRMSDGEYGRVIETVTFNRRTKLTYKFEKIYVFIAQIRKIQVGDKIAGRHGNKGIISRILSRQDMPFLPDGTPLDILLNPLGVPSRMNVGQLYECLLGLAGDKLNARFKILPFDEMYGLEISRILINKKLRQASIAKNESWLFNPYAPGKMVLIDGRTGKEFENPVTVGNAYMLKLIHLVDDKMHARATGPYSLITQQPLRGKAQHGGQRFGEMEVWALEGFGAAFTLKELLTIKSDDMQGRNETLNAIVKGQQIPKFGIPESFKVLLHELRSIGLDMSTYKINRFNSTKRYEVEVNLIEKYNALSKTFSPTSNINDISF</sequence>
<proteinExistence type="inferred from homology"/>
<gene>
    <name evidence="1" type="primary">rpoB</name>
</gene>
<geneLocation type="chloroplast"/>
<keyword id="KW-0150">Chloroplast</keyword>
<keyword id="KW-0240">DNA-directed RNA polymerase</keyword>
<keyword id="KW-0548">Nucleotidyltransferase</keyword>
<keyword id="KW-0934">Plastid</keyword>
<keyword id="KW-1185">Reference proteome</keyword>
<keyword id="KW-0804">Transcription</keyword>
<keyword id="KW-0808">Transferase</keyword>
<accession>A0T0D7</accession>
<organism>
    <name type="scientific">Phaeodactylum tricornutum (strain CCAP 1055/1)</name>
    <dbReference type="NCBI Taxonomy" id="556484"/>
    <lineage>
        <taxon>Eukaryota</taxon>
        <taxon>Sar</taxon>
        <taxon>Stramenopiles</taxon>
        <taxon>Ochrophyta</taxon>
        <taxon>Bacillariophyta</taxon>
        <taxon>Bacillariophyceae</taxon>
        <taxon>Bacillariophycidae</taxon>
        <taxon>Naviculales</taxon>
        <taxon>Phaeodactylaceae</taxon>
        <taxon>Phaeodactylum</taxon>
    </lineage>
</organism>
<evidence type="ECO:0000255" key="1">
    <source>
        <dbReference type="HAMAP-Rule" id="MF_01321"/>
    </source>
</evidence>
<protein>
    <recommendedName>
        <fullName evidence="1">DNA-directed RNA polymerase subunit beta</fullName>
        <ecNumber evidence="1">2.7.7.6</ecNumber>
    </recommendedName>
    <alternativeName>
        <fullName evidence="1">PEP</fullName>
    </alternativeName>
    <alternativeName>
        <fullName evidence="1">Plastid-encoded RNA polymerase subunit beta</fullName>
        <shortName evidence="1">RNA polymerase subunit beta</shortName>
    </alternativeName>
</protein>
<name>RPOB_PHATC</name>
<dbReference type="EC" id="2.7.7.6" evidence="1"/>
<dbReference type="EMBL" id="EF067920">
    <property type="protein sequence ID" value="ABK20635.1"/>
    <property type="molecule type" value="Genomic_DNA"/>
</dbReference>
<dbReference type="RefSeq" id="YP_874412.1">
    <property type="nucleotide sequence ID" value="NC_008588.1"/>
</dbReference>
<dbReference type="SMR" id="A0T0D7"/>
<dbReference type="FunCoup" id="A0T0D7">
    <property type="interactions" value="9"/>
</dbReference>
<dbReference type="STRING" id="556484.A0T0D7"/>
<dbReference type="GeneID" id="4524587"/>
<dbReference type="InParanoid" id="A0T0D7"/>
<dbReference type="Proteomes" id="UP000000759">
    <property type="component" value="Chloroplast"/>
</dbReference>
<dbReference type="GO" id="GO:0009507">
    <property type="term" value="C:chloroplast"/>
    <property type="evidence" value="ECO:0007669"/>
    <property type="project" value="UniProtKB-SubCell"/>
</dbReference>
<dbReference type="GO" id="GO:0000428">
    <property type="term" value="C:DNA-directed RNA polymerase complex"/>
    <property type="evidence" value="ECO:0007669"/>
    <property type="project" value="UniProtKB-KW"/>
</dbReference>
<dbReference type="GO" id="GO:0005739">
    <property type="term" value="C:mitochondrion"/>
    <property type="evidence" value="ECO:0007669"/>
    <property type="project" value="GOC"/>
</dbReference>
<dbReference type="GO" id="GO:0003677">
    <property type="term" value="F:DNA binding"/>
    <property type="evidence" value="ECO:0007669"/>
    <property type="project" value="UniProtKB-UniRule"/>
</dbReference>
<dbReference type="GO" id="GO:0003899">
    <property type="term" value="F:DNA-directed RNA polymerase activity"/>
    <property type="evidence" value="ECO:0007669"/>
    <property type="project" value="UniProtKB-UniRule"/>
</dbReference>
<dbReference type="GO" id="GO:0032549">
    <property type="term" value="F:ribonucleoside binding"/>
    <property type="evidence" value="ECO:0007669"/>
    <property type="project" value="InterPro"/>
</dbReference>
<dbReference type="GO" id="GO:0006351">
    <property type="term" value="P:DNA-templated transcription"/>
    <property type="evidence" value="ECO:0007669"/>
    <property type="project" value="UniProtKB-UniRule"/>
</dbReference>
<dbReference type="CDD" id="cd00653">
    <property type="entry name" value="RNA_pol_B_RPB2"/>
    <property type="match status" value="1"/>
</dbReference>
<dbReference type="Gene3D" id="2.40.50.100">
    <property type="match status" value="1"/>
</dbReference>
<dbReference type="Gene3D" id="2.40.50.150">
    <property type="match status" value="1"/>
</dbReference>
<dbReference type="Gene3D" id="3.90.1100.10">
    <property type="match status" value="2"/>
</dbReference>
<dbReference type="Gene3D" id="2.30.150.10">
    <property type="entry name" value="DNA-directed RNA polymerase, beta subunit, external 1 domain"/>
    <property type="match status" value="1"/>
</dbReference>
<dbReference type="Gene3D" id="2.40.270.10">
    <property type="entry name" value="DNA-directed RNA polymerase, subunit 2, domain 6"/>
    <property type="match status" value="1"/>
</dbReference>
<dbReference type="Gene3D" id="3.90.1800.10">
    <property type="entry name" value="RNA polymerase alpha subunit dimerisation domain"/>
    <property type="match status" value="1"/>
</dbReference>
<dbReference type="Gene3D" id="3.90.1110.10">
    <property type="entry name" value="RNA polymerase Rpb2, domain 2"/>
    <property type="match status" value="1"/>
</dbReference>
<dbReference type="HAMAP" id="MF_01321">
    <property type="entry name" value="RNApol_bact_RpoB"/>
    <property type="match status" value="1"/>
</dbReference>
<dbReference type="InterPro" id="IPR042107">
    <property type="entry name" value="DNA-dir_RNA_pol_bsu_ext_1_sf"/>
</dbReference>
<dbReference type="InterPro" id="IPR019462">
    <property type="entry name" value="DNA-dir_RNA_pol_bsu_external_1"/>
</dbReference>
<dbReference type="InterPro" id="IPR015712">
    <property type="entry name" value="DNA-dir_RNA_pol_su2"/>
</dbReference>
<dbReference type="InterPro" id="IPR007120">
    <property type="entry name" value="DNA-dir_RNAP_su2_dom"/>
</dbReference>
<dbReference type="InterPro" id="IPR037033">
    <property type="entry name" value="DNA-dir_RNAP_su2_hyb_sf"/>
</dbReference>
<dbReference type="InterPro" id="IPR010243">
    <property type="entry name" value="RNA_pol_bsu_bac"/>
</dbReference>
<dbReference type="InterPro" id="IPR007121">
    <property type="entry name" value="RNA_pol_bsu_CS"/>
</dbReference>
<dbReference type="InterPro" id="IPR007642">
    <property type="entry name" value="RNA_pol_Rpb2_2"/>
</dbReference>
<dbReference type="InterPro" id="IPR037034">
    <property type="entry name" value="RNA_pol_Rpb2_2_sf"/>
</dbReference>
<dbReference type="InterPro" id="IPR007645">
    <property type="entry name" value="RNA_pol_Rpb2_3"/>
</dbReference>
<dbReference type="InterPro" id="IPR007641">
    <property type="entry name" value="RNA_pol_Rpb2_7"/>
</dbReference>
<dbReference type="InterPro" id="IPR014724">
    <property type="entry name" value="RNA_pol_RPB2_OB-fold"/>
</dbReference>
<dbReference type="NCBIfam" id="NF001616">
    <property type="entry name" value="PRK00405.1"/>
    <property type="match status" value="1"/>
</dbReference>
<dbReference type="PANTHER" id="PTHR20856">
    <property type="entry name" value="DNA-DIRECTED RNA POLYMERASE I SUBUNIT 2"/>
    <property type="match status" value="1"/>
</dbReference>
<dbReference type="Pfam" id="PF04561">
    <property type="entry name" value="RNA_pol_Rpb2_2"/>
    <property type="match status" value="1"/>
</dbReference>
<dbReference type="Pfam" id="PF04565">
    <property type="entry name" value="RNA_pol_Rpb2_3"/>
    <property type="match status" value="1"/>
</dbReference>
<dbReference type="Pfam" id="PF10385">
    <property type="entry name" value="RNA_pol_Rpb2_45"/>
    <property type="match status" value="1"/>
</dbReference>
<dbReference type="Pfam" id="PF00562">
    <property type="entry name" value="RNA_pol_Rpb2_6"/>
    <property type="match status" value="1"/>
</dbReference>
<dbReference type="Pfam" id="PF04560">
    <property type="entry name" value="RNA_pol_Rpb2_7"/>
    <property type="match status" value="1"/>
</dbReference>
<dbReference type="SUPFAM" id="SSF64484">
    <property type="entry name" value="beta and beta-prime subunits of DNA dependent RNA-polymerase"/>
    <property type="match status" value="2"/>
</dbReference>
<dbReference type="PROSITE" id="PS01166">
    <property type="entry name" value="RNA_POL_BETA"/>
    <property type="match status" value="1"/>
</dbReference>
<comment type="function">
    <text evidence="1">DNA-dependent RNA polymerase catalyzes the transcription of DNA into RNA using the four ribonucleoside triphosphates as substrates.</text>
</comment>
<comment type="catalytic activity">
    <reaction evidence="1">
        <text>RNA(n) + a ribonucleoside 5'-triphosphate = RNA(n+1) + diphosphate</text>
        <dbReference type="Rhea" id="RHEA:21248"/>
        <dbReference type="Rhea" id="RHEA-COMP:14527"/>
        <dbReference type="Rhea" id="RHEA-COMP:17342"/>
        <dbReference type="ChEBI" id="CHEBI:33019"/>
        <dbReference type="ChEBI" id="CHEBI:61557"/>
        <dbReference type="ChEBI" id="CHEBI:140395"/>
        <dbReference type="EC" id="2.7.7.6"/>
    </reaction>
</comment>
<comment type="subunit">
    <text evidence="1">In plastids the minimal PEP RNA polymerase catalytic core is composed of four subunits: alpha, beta, beta', and beta''. When a (nuclear-encoded) sigma factor is associated with the core the holoenzyme is formed, which can initiate transcription.</text>
</comment>
<comment type="subcellular location">
    <subcellularLocation>
        <location>Plastid</location>
        <location>Chloroplast</location>
    </subcellularLocation>
</comment>
<comment type="similarity">
    <text evidence="1">Belongs to the RNA polymerase beta chain family.</text>
</comment>